<sequence>MKFPESLKGLKILVLGGGISGNSALDFLISEEAQPILCDRNQPETISVPFFHDNIDPRSFFEISLIIKSPGILPTHPILSYAVEKKIPVFSEIDLGRFFFKGKIIGITGTDGKSTTTSLVAHLLKKDFSDLKEGGNLGIPFTSFCKEPISLAVLELSSYQLEDSSPLDLNVSVFLNLAPDHLERHETMENYFRAKLKIADLQNPNHSLIVSEKIREKILNSTSVQCKLLSFGRATTSEAILDESSSEIRTSKFIYDISRFYLPGTHNRENLAAAILASEAIGGKPESIQAQIPFFMGLPHRFQIAGEKRGISFINDSKSTNLHSMLAGMSAWKNLDRTCLILGGRPKQEDPKPLYDFLMRGIGCVVLIGEARSVWEKGIRNVIGEKLFSVENLDEAFKIFKKWNVISESPEIRKIRLSSEITISYFVFSPACVSFDQYKNFEERGNHFLSLVEDFLNNASWT</sequence>
<accession>Q04Z09</accession>
<dbReference type="EC" id="6.3.2.9" evidence="1"/>
<dbReference type="EMBL" id="CP000348">
    <property type="protein sequence ID" value="ABJ79686.1"/>
    <property type="molecule type" value="Genomic_DNA"/>
</dbReference>
<dbReference type="RefSeq" id="WP_011670694.1">
    <property type="nucleotide sequence ID" value="NC_008508.1"/>
</dbReference>
<dbReference type="SMR" id="Q04Z09"/>
<dbReference type="KEGG" id="lbl:LBL_2290"/>
<dbReference type="HOGENOM" id="CLU_032540_1_0_12"/>
<dbReference type="UniPathway" id="UPA00219"/>
<dbReference type="GO" id="GO:0005737">
    <property type="term" value="C:cytoplasm"/>
    <property type="evidence" value="ECO:0007669"/>
    <property type="project" value="UniProtKB-SubCell"/>
</dbReference>
<dbReference type="GO" id="GO:0005524">
    <property type="term" value="F:ATP binding"/>
    <property type="evidence" value="ECO:0007669"/>
    <property type="project" value="UniProtKB-UniRule"/>
</dbReference>
<dbReference type="GO" id="GO:0008764">
    <property type="term" value="F:UDP-N-acetylmuramoylalanine-D-glutamate ligase activity"/>
    <property type="evidence" value="ECO:0007669"/>
    <property type="project" value="UniProtKB-UniRule"/>
</dbReference>
<dbReference type="GO" id="GO:0051301">
    <property type="term" value="P:cell division"/>
    <property type="evidence" value="ECO:0007669"/>
    <property type="project" value="UniProtKB-KW"/>
</dbReference>
<dbReference type="GO" id="GO:0071555">
    <property type="term" value="P:cell wall organization"/>
    <property type="evidence" value="ECO:0007669"/>
    <property type="project" value="UniProtKB-KW"/>
</dbReference>
<dbReference type="GO" id="GO:0009252">
    <property type="term" value="P:peptidoglycan biosynthetic process"/>
    <property type="evidence" value="ECO:0007669"/>
    <property type="project" value="UniProtKB-UniRule"/>
</dbReference>
<dbReference type="GO" id="GO:0008360">
    <property type="term" value="P:regulation of cell shape"/>
    <property type="evidence" value="ECO:0007669"/>
    <property type="project" value="UniProtKB-KW"/>
</dbReference>
<dbReference type="Gene3D" id="3.90.190.20">
    <property type="entry name" value="Mur ligase, C-terminal domain"/>
    <property type="match status" value="1"/>
</dbReference>
<dbReference type="Gene3D" id="3.40.1190.10">
    <property type="entry name" value="Mur-like, catalytic domain"/>
    <property type="match status" value="1"/>
</dbReference>
<dbReference type="Gene3D" id="3.40.50.720">
    <property type="entry name" value="NAD(P)-binding Rossmann-like Domain"/>
    <property type="match status" value="1"/>
</dbReference>
<dbReference type="HAMAP" id="MF_00639">
    <property type="entry name" value="MurD"/>
    <property type="match status" value="1"/>
</dbReference>
<dbReference type="InterPro" id="IPR036565">
    <property type="entry name" value="Mur-like_cat_sf"/>
</dbReference>
<dbReference type="InterPro" id="IPR036615">
    <property type="entry name" value="Mur_ligase_C_dom_sf"/>
</dbReference>
<dbReference type="InterPro" id="IPR013221">
    <property type="entry name" value="Mur_ligase_cen"/>
</dbReference>
<dbReference type="InterPro" id="IPR005762">
    <property type="entry name" value="MurD"/>
</dbReference>
<dbReference type="NCBIfam" id="TIGR01087">
    <property type="entry name" value="murD"/>
    <property type="match status" value="1"/>
</dbReference>
<dbReference type="PANTHER" id="PTHR43692">
    <property type="entry name" value="UDP-N-ACETYLMURAMOYLALANINE--D-GLUTAMATE LIGASE"/>
    <property type="match status" value="1"/>
</dbReference>
<dbReference type="PANTHER" id="PTHR43692:SF1">
    <property type="entry name" value="UDP-N-ACETYLMURAMOYLALANINE--D-GLUTAMATE LIGASE"/>
    <property type="match status" value="1"/>
</dbReference>
<dbReference type="Pfam" id="PF08245">
    <property type="entry name" value="Mur_ligase_M"/>
    <property type="match status" value="1"/>
</dbReference>
<dbReference type="Pfam" id="PF21799">
    <property type="entry name" value="MurD-like_N"/>
    <property type="match status" value="1"/>
</dbReference>
<dbReference type="SUPFAM" id="SSF51984">
    <property type="entry name" value="MurCD N-terminal domain"/>
    <property type="match status" value="1"/>
</dbReference>
<dbReference type="SUPFAM" id="SSF53623">
    <property type="entry name" value="MurD-like peptide ligases, catalytic domain"/>
    <property type="match status" value="1"/>
</dbReference>
<dbReference type="SUPFAM" id="SSF53244">
    <property type="entry name" value="MurD-like peptide ligases, peptide-binding domain"/>
    <property type="match status" value="1"/>
</dbReference>
<proteinExistence type="inferred from homology"/>
<organism>
    <name type="scientific">Leptospira borgpetersenii serovar Hardjo-bovis (strain L550)</name>
    <dbReference type="NCBI Taxonomy" id="355276"/>
    <lineage>
        <taxon>Bacteria</taxon>
        <taxon>Pseudomonadati</taxon>
        <taxon>Spirochaetota</taxon>
        <taxon>Spirochaetia</taxon>
        <taxon>Leptospirales</taxon>
        <taxon>Leptospiraceae</taxon>
        <taxon>Leptospira</taxon>
    </lineage>
</organism>
<keyword id="KW-0067">ATP-binding</keyword>
<keyword id="KW-0131">Cell cycle</keyword>
<keyword id="KW-0132">Cell division</keyword>
<keyword id="KW-0133">Cell shape</keyword>
<keyword id="KW-0961">Cell wall biogenesis/degradation</keyword>
<keyword id="KW-0963">Cytoplasm</keyword>
<keyword id="KW-0436">Ligase</keyword>
<keyword id="KW-0547">Nucleotide-binding</keyword>
<keyword id="KW-0573">Peptidoglycan synthesis</keyword>
<evidence type="ECO:0000255" key="1">
    <source>
        <dbReference type="HAMAP-Rule" id="MF_00639"/>
    </source>
</evidence>
<comment type="function">
    <text evidence="1">Cell wall formation. Catalyzes the addition of glutamate to the nucleotide precursor UDP-N-acetylmuramoyl-L-alanine (UMA).</text>
</comment>
<comment type="catalytic activity">
    <reaction evidence="1">
        <text>UDP-N-acetyl-alpha-D-muramoyl-L-alanine + D-glutamate + ATP = UDP-N-acetyl-alpha-D-muramoyl-L-alanyl-D-glutamate + ADP + phosphate + H(+)</text>
        <dbReference type="Rhea" id="RHEA:16429"/>
        <dbReference type="ChEBI" id="CHEBI:15378"/>
        <dbReference type="ChEBI" id="CHEBI:29986"/>
        <dbReference type="ChEBI" id="CHEBI:30616"/>
        <dbReference type="ChEBI" id="CHEBI:43474"/>
        <dbReference type="ChEBI" id="CHEBI:83898"/>
        <dbReference type="ChEBI" id="CHEBI:83900"/>
        <dbReference type="ChEBI" id="CHEBI:456216"/>
        <dbReference type="EC" id="6.3.2.9"/>
    </reaction>
</comment>
<comment type="pathway">
    <text evidence="1">Cell wall biogenesis; peptidoglycan biosynthesis.</text>
</comment>
<comment type="subcellular location">
    <subcellularLocation>
        <location evidence="1">Cytoplasm</location>
    </subcellularLocation>
</comment>
<comment type="similarity">
    <text evidence="1">Belongs to the MurCDEF family.</text>
</comment>
<protein>
    <recommendedName>
        <fullName evidence="1">UDP-N-acetylmuramoylalanine--D-glutamate ligase</fullName>
        <ecNumber evidence="1">6.3.2.9</ecNumber>
    </recommendedName>
    <alternativeName>
        <fullName evidence="1">D-glutamic acid-adding enzyme</fullName>
    </alternativeName>
    <alternativeName>
        <fullName evidence="1">UDP-N-acetylmuramoyl-L-alanyl-D-glutamate synthetase</fullName>
    </alternativeName>
</protein>
<name>MURD_LEPBL</name>
<reference key="1">
    <citation type="journal article" date="2006" name="Proc. Natl. Acad. Sci. U.S.A.">
        <title>Genome reduction in Leptospira borgpetersenii reflects limited transmission potential.</title>
        <authorList>
            <person name="Bulach D.M."/>
            <person name="Zuerner R.L."/>
            <person name="Wilson P."/>
            <person name="Seemann T."/>
            <person name="McGrath A."/>
            <person name="Cullen P.A."/>
            <person name="Davis J."/>
            <person name="Johnson M."/>
            <person name="Kuczek E."/>
            <person name="Alt D.P."/>
            <person name="Peterson-Burch B."/>
            <person name="Coppel R.L."/>
            <person name="Rood J.I."/>
            <person name="Davies J.K."/>
            <person name="Adler B."/>
        </authorList>
    </citation>
    <scope>NUCLEOTIDE SEQUENCE [LARGE SCALE GENOMIC DNA]</scope>
    <source>
        <strain>L550</strain>
    </source>
</reference>
<gene>
    <name evidence="1" type="primary">murD</name>
    <name type="ordered locus">LBL_2290</name>
</gene>
<feature type="chain" id="PRO_0000301435" description="UDP-N-acetylmuramoylalanine--D-glutamate ligase">
    <location>
        <begin position="1"/>
        <end position="462"/>
    </location>
</feature>
<feature type="binding site" evidence="1">
    <location>
        <begin position="109"/>
        <end position="115"/>
    </location>
    <ligand>
        <name>ATP</name>
        <dbReference type="ChEBI" id="CHEBI:30616"/>
    </ligand>
</feature>